<reference key="1">
    <citation type="journal article" date="1998" name="J. Mol. Evol.">
        <title>Organization and nucleotide sequence of the cluster of five histone genes in the polichaete worm Chaetopterus variopedatus: first record of a H1 histone gene in the phylum Annelida.</title>
        <authorList>
            <person name="del Gaudio R."/>
            <person name="Potenza N."/>
            <person name="Stefanoni P."/>
            <person name="Chiusano M.L."/>
            <person name="Geraci G."/>
        </authorList>
    </citation>
    <scope>NUCLEOTIDE SEQUENCE [GENOMIC DNA]</scope>
</reference>
<comment type="function">
    <text>Core component of nucleosome. Nucleosomes wrap and compact DNA into chromatin, limiting DNA accessibility to the cellular machineries which require DNA as a template. Histones thereby play a central role in transcription regulation, DNA repair, DNA replication and chromosomal stability. DNA accessibility is regulated via a complex set of post-translational modifications of histones, also called histone code, and nucleosome remodeling.</text>
</comment>
<comment type="subunit">
    <text>The nucleosome is a histone octamer containing two molecules each of H2A, H2B, H3 and H4 assembled in one H3-H4 heterotetramer and two H2A-H2B heterodimers. The octamer wraps approximately 147 bp of DNA.</text>
</comment>
<comment type="subcellular location">
    <subcellularLocation>
        <location evidence="1">Nucleus</location>
    </subcellularLocation>
    <subcellularLocation>
        <location evidence="1">Chromosome</location>
    </subcellularLocation>
</comment>
<comment type="similarity">
    <text evidence="4">Belongs to the histone H4 family.</text>
</comment>
<organism>
    <name type="scientific">Chaetopterus variopedatus</name>
    <name type="common">Parchment tube worm</name>
    <name type="synonym">Tricoelia variopedata</name>
    <dbReference type="NCBI Taxonomy" id="34590"/>
    <lineage>
        <taxon>Eukaryota</taxon>
        <taxon>Metazoa</taxon>
        <taxon>Spiralia</taxon>
        <taxon>Lophotrochozoa</taxon>
        <taxon>Annelida</taxon>
        <taxon>Polychaeta</taxon>
        <taxon>Sedentaria</taxon>
        <taxon>Chaetopteridae</taxon>
        <taxon>Chaetopterus</taxon>
    </lineage>
</organism>
<keyword id="KW-0007">Acetylation</keyword>
<keyword id="KW-0158">Chromosome</keyword>
<keyword id="KW-0238">DNA-binding</keyword>
<keyword id="KW-0488">Methylation</keyword>
<keyword id="KW-0544">Nucleosome core</keyword>
<keyword id="KW-0539">Nucleus</keyword>
<feature type="initiator methionine" description="Removed" evidence="1">
    <location>
        <position position="1"/>
    </location>
</feature>
<feature type="chain" id="PRO_0000158294" description="Histone H4">
    <location>
        <begin position="2"/>
        <end position="103"/>
    </location>
</feature>
<feature type="DNA-binding region">
    <location>
        <begin position="17"/>
        <end position="21"/>
    </location>
</feature>
<feature type="region of interest" description="Disordered" evidence="3">
    <location>
        <begin position="1"/>
        <end position="20"/>
    </location>
</feature>
<feature type="compositionally biased region" description="Gly residues" evidence="3">
    <location>
        <begin position="1"/>
        <end position="14"/>
    </location>
</feature>
<feature type="modified residue" description="N-acetylserine" evidence="1">
    <location>
        <position position="2"/>
    </location>
</feature>
<feature type="modified residue" description="N6-acetyl-N6-methyllysine; alternate" evidence="2">
    <location>
        <position position="6"/>
    </location>
</feature>
<feature type="modified residue" description="N6-acetyl-N6-methyllysine; alternate" evidence="2">
    <location>
        <position position="13"/>
    </location>
</feature>
<feature type="modified residue" description="N6-acetyllysine" evidence="1">
    <location>
        <position position="17"/>
    </location>
</feature>
<feature type="modified residue" description="N6-methyllysine" evidence="1">
    <location>
        <position position="21"/>
    </location>
</feature>
<sequence length="103" mass="11367">MSGRGKGGKGLGKGGAKRHRKVLRDNIQGITKPAIRRLARRGGVKRISGLIYEETRGVLKVFLENVIRDAVTYTEHAKRKTVTAMDVVYALKRQGRTLYGFGG</sequence>
<proteinExistence type="inferred from homology"/>
<accession>Q7KQD1</accession>
<evidence type="ECO:0000250" key="1"/>
<evidence type="ECO:0000250" key="2">
    <source>
        <dbReference type="UniProtKB" id="P62805"/>
    </source>
</evidence>
<evidence type="ECO:0000256" key="3">
    <source>
        <dbReference type="SAM" id="MobiDB-lite"/>
    </source>
</evidence>
<evidence type="ECO:0000305" key="4"/>
<protein>
    <recommendedName>
        <fullName>Histone H4</fullName>
    </recommendedName>
</protein>
<dbReference type="EMBL" id="AF007904">
    <property type="protein sequence ID" value="AAC15917.1"/>
    <property type="molecule type" value="Genomic_DNA"/>
</dbReference>
<dbReference type="SMR" id="Q7KQD1"/>
<dbReference type="GO" id="GO:0000786">
    <property type="term" value="C:nucleosome"/>
    <property type="evidence" value="ECO:0007669"/>
    <property type="project" value="UniProtKB-KW"/>
</dbReference>
<dbReference type="GO" id="GO:0005634">
    <property type="term" value="C:nucleus"/>
    <property type="evidence" value="ECO:0007669"/>
    <property type="project" value="UniProtKB-SubCell"/>
</dbReference>
<dbReference type="GO" id="GO:0003677">
    <property type="term" value="F:DNA binding"/>
    <property type="evidence" value="ECO:0007669"/>
    <property type="project" value="UniProtKB-KW"/>
</dbReference>
<dbReference type="GO" id="GO:0046982">
    <property type="term" value="F:protein heterodimerization activity"/>
    <property type="evidence" value="ECO:0007669"/>
    <property type="project" value="InterPro"/>
</dbReference>
<dbReference type="GO" id="GO:0030527">
    <property type="term" value="F:structural constituent of chromatin"/>
    <property type="evidence" value="ECO:0007669"/>
    <property type="project" value="InterPro"/>
</dbReference>
<dbReference type="CDD" id="cd22912">
    <property type="entry name" value="HFD_H4"/>
    <property type="match status" value="1"/>
</dbReference>
<dbReference type="FunFam" id="1.10.20.10:FF:000002">
    <property type="entry name" value="Histone H4"/>
    <property type="match status" value="1"/>
</dbReference>
<dbReference type="Gene3D" id="1.10.20.10">
    <property type="entry name" value="Histone, subunit A"/>
    <property type="match status" value="1"/>
</dbReference>
<dbReference type="InterPro" id="IPR035425">
    <property type="entry name" value="CENP-T/H4_C"/>
</dbReference>
<dbReference type="InterPro" id="IPR009072">
    <property type="entry name" value="Histone-fold"/>
</dbReference>
<dbReference type="InterPro" id="IPR001951">
    <property type="entry name" value="Histone_H4"/>
</dbReference>
<dbReference type="InterPro" id="IPR019809">
    <property type="entry name" value="Histone_H4_CS"/>
</dbReference>
<dbReference type="InterPro" id="IPR004823">
    <property type="entry name" value="TAF_TATA-bd_Histone-like_dom"/>
</dbReference>
<dbReference type="PANTHER" id="PTHR10484">
    <property type="entry name" value="HISTONE H4"/>
    <property type="match status" value="1"/>
</dbReference>
<dbReference type="Pfam" id="PF15511">
    <property type="entry name" value="CENP-T_C"/>
    <property type="match status" value="1"/>
</dbReference>
<dbReference type="PRINTS" id="PR00623">
    <property type="entry name" value="HISTONEH4"/>
</dbReference>
<dbReference type="SMART" id="SM00417">
    <property type="entry name" value="H4"/>
    <property type="match status" value="1"/>
</dbReference>
<dbReference type="SMART" id="SM00803">
    <property type="entry name" value="TAF"/>
    <property type="match status" value="1"/>
</dbReference>
<dbReference type="SUPFAM" id="SSF47113">
    <property type="entry name" value="Histone-fold"/>
    <property type="match status" value="1"/>
</dbReference>
<dbReference type="PROSITE" id="PS00047">
    <property type="entry name" value="HISTONE_H4"/>
    <property type="match status" value="1"/>
</dbReference>
<name>H4_CHAVR</name>